<gene>
    <name type="primary">Knstrn</name>
    <name type="synonym">D2Ertd750e</name>
    <name type="synonym">Skap</name>
    <name type="synonym">Traf4af1</name>
</gene>
<feature type="chain" id="PRO_0000274513" description="Small kinetochore-associated protein">
    <location>
        <begin position="1"/>
        <end position="312"/>
    </location>
</feature>
<feature type="region of interest" description="Disordered" evidence="3">
    <location>
        <begin position="1"/>
        <end position="171"/>
    </location>
</feature>
<feature type="region of interest" description="Interaction with SPAG5" evidence="1">
    <location>
        <begin position="156"/>
        <end position="312"/>
    </location>
</feature>
<feature type="coiled-coil region" evidence="2">
    <location>
        <begin position="166"/>
        <end position="210"/>
    </location>
</feature>
<feature type="coiled-coil region" evidence="2">
    <location>
        <begin position="246"/>
        <end position="287"/>
    </location>
</feature>
<feature type="compositionally biased region" description="Basic and acidic residues" evidence="3">
    <location>
        <begin position="131"/>
        <end position="143"/>
    </location>
</feature>
<feature type="sequence conflict" description="In Ref. 1; BAB24529." evidence="4" ref="1">
    <original>F</original>
    <variation>I</variation>
    <location>
        <position position="210"/>
    </location>
</feature>
<keyword id="KW-0131">Cell cycle</keyword>
<keyword id="KW-0132">Cell division</keyword>
<keyword id="KW-0137">Centromere</keyword>
<keyword id="KW-0158">Chromosome</keyword>
<keyword id="KW-0175">Coiled coil</keyword>
<keyword id="KW-0963">Cytoplasm</keyword>
<keyword id="KW-0206">Cytoskeleton</keyword>
<keyword id="KW-0995">Kinetochore</keyword>
<keyword id="KW-0493">Microtubule</keyword>
<keyword id="KW-0498">Mitosis</keyword>
<keyword id="KW-0539">Nucleus</keyword>
<keyword id="KW-1185">Reference proteome</keyword>
<reference key="1">
    <citation type="journal article" date="2005" name="Science">
        <title>The transcriptional landscape of the mammalian genome.</title>
        <authorList>
            <person name="Carninci P."/>
            <person name="Kasukawa T."/>
            <person name="Katayama S."/>
            <person name="Gough J."/>
            <person name="Frith M.C."/>
            <person name="Maeda N."/>
            <person name="Oyama R."/>
            <person name="Ravasi T."/>
            <person name="Lenhard B."/>
            <person name="Wells C."/>
            <person name="Kodzius R."/>
            <person name="Shimokawa K."/>
            <person name="Bajic V.B."/>
            <person name="Brenner S.E."/>
            <person name="Batalov S."/>
            <person name="Forrest A.R."/>
            <person name="Zavolan M."/>
            <person name="Davis M.J."/>
            <person name="Wilming L.G."/>
            <person name="Aidinis V."/>
            <person name="Allen J.E."/>
            <person name="Ambesi-Impiombato A."/>
            <person name="Apweiler R."/>
            <person name="Aturaliya R.N."/>
            <person name="Bailey T.L."/>
            <person name="Bansal M."/>
            <person name="Baxter L."/>
            <person name="Beisel K.W."/>
            <person name="Bersano T."/>
            <person name="Bono H."/>
            <person name="Chalk A.M."/>
            <person name="Chiu K.P."/>
            <person name="Choudhary V."/>
            <person name="Christoffels A."/>
            <person name="Clutterbuck D.R."/>
            <person name="Crowe M.L."/>
            <person name="Dalla E."/>
            <person name="Dalrymple B.P."/>
            <person name="de Bono B."/>
            <person name="Della Gatta G."/>
            <person name="di Bernardo D."/>
            <person name="Down T."/>
            <person name="Engstrom P."/>
            <person name="Fagiolini M."/>
            <person name="Faulkner G."/>
            <person name="Fletcher C.F."/>
            <person name="Fukushima T."/>
            <person name="Furuno M."/>
            <person name="Futaki S."/>
            <person name="Gariboldi M."/>
            <person name="Georgii-Hemming P."/>
            <person name="Gingeras T.R."/>
            <person name="Gojobori T."/>
            <person name="Green R.E."/>
            <person name="Gustincich S."/>
            <person name="Harbers M."/>
            <person name="Hayashi Y."/>
            <person name="Hensch T.K."/>
            <person name="Hirokawa N."/>
            <person name="Hill D."/>
            <person name="Huminiecki L."/>
            <person name="Iacono M."/>
            <person name="Ikeo K."/>
            <person name="Iwama A."/>
            <person name="Ishikawa T."/>
            <person name="Jakt M."/>
            <person name="Kanapin A."/>
            <person name="Katoh M."/>
            <person name="Kawasawa Y."/>
            <person name="Kelso J."/>
            <person name="Kitamura H."/>
            <person name="Kitano H."/>
            <person name="Kollias G."/>
            <person name="Krishnan S.P."/>
            <person name="Kruger A."/>
            <person name="Kummerfeld S.K."/>
            <person name="Kurochkin I.V."/>
            <person name="Lareau L.F."/>
            <person name="Lazarevic D."/>
            <person name="Lipovich L."/>
            <person name="Liu J."/>
            <person name="Liuni S."/>
            <person name="McWilliam S."/>
            <person name="Madan Babu M."/>
            <person name="Madera M."/>
            <person name="Marchionni L."/>
            <person name="Matsuda H."/>
            <person name="Matsuzawa S."/>
            <person name="Miki H."/>
            <person name="Mignone F."/>
            <person name="Miyake S."/>
            <person name="Morris K."/>
            <person name="Mottagui-Tabar S."/>
            <person name="Mulder N."/>
            <person name="Nakano N."/>
            <person name="Nakauchi H."/>
            <person name="Ng P."/>
            <person name="Nilsson R."/>
            <person name="Nishiguchi S."/>
            <person name="Nishikawa S."/>
            <person name="Nori F."/>
            <person name="Ohara O."/>
            <person name="Okazaki Y."/>
            <person name="Orlando V."/>
            <person name="Pang K.C."/>
            <person name="Pavan W.J."/>
            <person name="Pavesi G."/>
            <person name="Pesole G."/>
            <person name="Petrovsky N."/>
            <person name="Piazza S."/>
            <person name="Reed J."/>
            <person name="Reid J.F."/>
            <person name="Ring B.Z."/>
            <person name="Ringwald M."/>
            <person name="Rost B."/>
            <person name="Ruan Y."/>
            <person name="Salzberg S.L."/>
            <person name="Sandelin A."/>
            <person name="Schneider C."/>
            <person name="Schoenbach C."/>
            <person name="Sekiguchi K."/>
            <person name="Semple C.A."/>
            <person name="Seno S."/>
            <person name="Sessa L."/>
            <person name="Sheng Y."/>
            <person name="Shibata Y."/>
            <person name="Shimada H."/>
            <person name="Shimada K."/>
            <person name="Silva D."/>
            <person name="Sinclair B."/>
            <person name="Sperling S."/>
            <person name="Stupka E."/>
            <person name="Sugiura K."/>
            <person name="Sultana R."/>
            <person name="Takenaka Y."/>
            <person name="Taki K."/>
            <person name="Tammoja K."/>
            <person name="Tan S.L."/>
            <person name="Tang S."/>
            <person name="Taylor M.S."/>
            <person name="Tegner J."/>
            <person name="Teichmann S.A."/>
            <person name="Ueda H.R."/>
            <person name="van Nimwegen E."/>
            <person name="Verardo R."/>
            <person name="Wei C.L."/>
            <person name="Yagi K."/>
            <person name="Yamanishi H."/>
            <person name="Zabarovsky E."/>
            <person name="Zhu S."/>
            <person name="Zimmer A."/>
            <person name="Hide W."/>
            <person name="Bult C."/>
            <person name="Grimmond S.M."/>
            <person name="Teasdale R.D."/>
            <person name="Liu E.T."/>
            <person name="Brusic V."/>
            <person name="Quackenbush J."/>
            <person name="Wahlestedt C."/>
            <person name="Mattick J.S."/>
            <person name="Hume D.A."/>
            <person name="Kai C."/>
            <person name="Sasaki D."/>
            <person name="Tomaru Y."/>
            <person name="Fukuda S."/>
            <person name="Kanamori-Katayama M."/>
            <person name="Suzuki M."/>
            <person name="Aoki J."/>
            <person name="Arakawa T."/>
            <person name="Iida J."/>
            <person name="Imamura K."/>
            <person name="Itoh M."/>
            <person name="Kato T."/>
            <person name="Kawaji H."/>
            <person name="Kawagashira N."/>
            <person name="Kawashima T."/>
            <person name="Kojima M."/>
            <person name="Kondo S."/>
            <person name="Konno H."/>
            <person name="Nakano K."/>
            <person name="Ninomiya N."/>
            <person name="Nishio T."/>
            <person name="Okada M."/>
            <person name="Plessy C."/>
            <person name="Shibata K."/>
            <person name="Shiraki T."/>
            <person name="Suzuki S."/>
            <person name="Tagami M."/>
            <person name="Waki K."/>
            <person name="Watahiki A."/>
            <person name="Okamura-Oho Y."/>
            <person name="Suzuki H."/>
            <person name="Kawai J."/>
            <person name="Hayashizaki Y."/>
        </authorList>
    </citation>
    <scope>NUCLEOTIDE SEQUENCE [LARGE SCALE MRNA]</scope>
    <source>
        <strain>C57BL/6J</strain>
        <tissue>Testis</tissue>
    </source>
</reference>
<reference key="2">
    <citation type="journal article" date="2004" name="Genome Res.">
        <title>The status, quality, and expansion of the NIH full-length cDNA project: the Mammalian Gene Collection (MGC).</title>
        <authorList>
            <consortium name="The MGC Project Team"/>
        </authorList>
    </citation>
    <scope>NUCLEOTIDE SEQUENCE [LARGE SCALE MRNA] OF 66-312</scope>
    <source>
        <strain>Czech II</strain>
        <tissue>Mammary tumor</tissue>
    </source>
</reference>
<protein>
    <recommendedName>
        <fullName>Small kinetochore-associated protein</fullName>
        <shortName>SKAP</shortName>
    </recommendedName>
    <alternativeName>
        <fullName>Kinetochore-localized astrin-binding protein</fullName>
        <shortName>Kinastrin</shortName>
    </alternativeName>
    <alternativeName>
        <fullName>Kinetochore-localized astrin/SPAG5-binding protein</fullName>
    </alternativeName>
    <alternativeName>
        <fullName>TRAF4-associated factor 1</fullName>
    </alternativeName>
</protein>
<organism>
    <name type="scientific">Mus musculus</name>
    <name type="common">Mouse</name>
    <dbReference type="NCBI Taxonomy" id="10090"/>
    <lineage>
        <taxon>Eukaryota</taxon>
        <taxon>Metazoa</taxon>
        <taxon>Chordata</taxon>
        <taxon>Craniata</taxon>
        <taxon>Vertebrata</taxon>
        <taxon>Euteleostomi</taxon>
        <taxon>Mammalia</taxon>
        <taxon>Eutheria</taxon>
        <taxon>Euarchontoglires</taxon>
        <taxon>Glires</taxon>
        <taxon>Rodentia</taxon>
        <taxon>Myomorpha</taxon>
        <taxon>Muroidea</taxon>
        <taxon>Muridae</taxon>
        <taxon>Murinae</taxon>
        <taxon>Mus</taxon>
        <taxon>Mus</taxon>
    </lineage>
</organism>
<comment type="function">
    <text evidence="1">Essential component of the mitotic spindle required for faithful chromosome segregation and progression into anaphase. Promotes the metaphase-to-anaphase transition and is required for chromosome alignment, normal timing of sister chromatid segregation, and maintenance of spindle pole architecture. The astrin (SPAG5)-kinastrin (SKAP) complex promotes stable microtubule-kinetochore attachments. Required for kinetochore oscillations and dynamics of microtubule plus-ends during live cell mitosis, possibly by forming a link between spindle microtubule plus-ends and mitotic chromosomes to achieve faithful cell division.</text>
</comment>
<comment type="subunit">
    <text evidence="1">Part of an astrin (SPAG5)-kinastrin (SKAP) complex containing KNSTRN, SPAG5, PLK1, DYNLL1 and SGO2A (By similarity). Interacts with SPAG5 (By similarity). Directly binds to microtubules, although at relatively low affinity (By similarity). Interacts with CENPE; this interaction greatly favors microtubule-binding (By similarity). Interacts with DSN1/MIS13; leading to localization to kinetochores (By similarity). Interacts with MAPRE1/EB1; leading to localization to the microtubule plus ends (By similarity). Interacts with PRPF19 (By similarity). Interacts with DYNLL1 (By similarity). Interacts with MAP4 (By similarity).</text>
</comment>
<comment type="subcellular location">
    <subcellularLocation>
        <location evidence="1">Nucleus</location>
    </subcellularLocation>
    <subcellularLocation>
        <location evidence="1">Chromosome</location>
        <location evidence="1">Centromere</location>
        <location evidence="1">Kinetochore</location>
    </subcellularLocation>
    <subcellularLocation>
        <location evidence="1">Cytoplasm</location>
        <location evidence="1">Cytoskeleton</location>
        <location evidence="1">Spindle pole</location>
    </subcellularLocation>
    <subcellularLocation>
        <location evidence="1">Cytoplasm</location>
        <location evidence="1">Cytoskeleton</location>
        <location evidence="1">Microtubule organizing center</location>
    </subcellularLocation>
    <text evidence="1">Colocalizes with microtubules around centrosomes in prophase and with the mitotic spindle at prometaphase and metaphase. From late prometaphase to anaphase, is highly concentrated on kinetochores. Located at the kinetochore-microtubule interface. The astrin (SPAG5)-kinastrin (SKAP) complex localizes to the microtubule plus ends.</text>
</comment>
<comment type="domain">
    <text evidence="1">The coiled coil regions mediate binding to kinetochores.</text>
</comment>
<comment type="sequence caution" evidence="4">
    <conflict type="erroneous initiation">
        <sequence resource="EMBL-CDS" id="AAH31709"/>
    </conflict>
</comment>
<accession>Q9D9Z1</accession>
<accession>Q8K2D9</accession>
<evidence type="ECO:0000250" key="1">
    <source>
        <dbReference type="UniProtKB" id="Q9Y448"/>
    </source>
</evidence>
<evidence type="ECO:0000255" key="2"/>
<evidence type="ECO:0000256" key="3">
    <source>
        <dbReference type="SAM" id="MobiDB-lite"/>
    </source>
</evidence>
<evidence type="ECO:0000305" key="4"/>
<dbReference type="EMBL" id="AK006328">
    <property type="protein sequence ID" value="BAB24529.1"/>
    <property type="molecule type" value="mRNA"/>
</dbReference>
<dbReference type="EMBL" id="BC031709">
    <property type="protein sequence ID" value="AAH31709.1"/>
    <property type="status" value="ALT_INIT"/>
    <property type="molecule type" value="mRNA"/>
</dbReference>
<dbReference type="CCDS" id="CCDS16585.1"/>
<dbReference type="RefSeq" id="NP_080688.2">
    <property type="nucleotide sequence ID" value="NM_026412.3"/>
</dbReference>
<dbReference type="SMR" id="Q9D9Z1"/>
<dbReference type="BioGRID" id="206280">
    <property type="interactions" value="6"/>
</dbReference>
<dbReference type="FunCoup" id="Q9D9Z1">
    <property type="interactions" value="178"/>
</dbReference>
<dbReference type="IntAct" id="Q9D9Z1">
    <property type="interactions" value="4"/>
</dbReference>
<dbReference type="MINT" id="Q9D9Z1"/>
<dbReference type="STRING" id="10090.ENSMUSP00000115860"/>
<dbReference type="GlyGen" id="Q9D9Z1">
    <property type="glycosylation" value="1 site, 1 O-linked glycan (1 site)"/>
</dbReference>
<dbReference type="PhosphoSitePlus" id="Q9D9Z1"/>
<dbReference type="PaxDb" id="10090-ENSMUSP00000115860"/>
<dbReference type="ProteomicsDB" id="257193"/>
<dbReference type="Pumba" id="Q9D9Z1"/>
<dbReference type="Antibodypedia" id="52276">
    <property type="antibodies" value="44 antibodies from 15 providers"/>
</dbReference>
<dbReference type="DNASU" id="51944"/>
<dbReference type="Ensembl" id="ENSMUST00000134661.8">
    <property type="protein sequence ID" value="ENSMUSP00000115860.2"/>
    <property type="gene ID" value="ENSMUSG00000027331.16"/>
</dbReference>
<dbReference type="GeneID" id="51944"/>
<dbReference type="KEGG" id="mmu:51944"/>
<dbReference type="UCSC" id="uc008lst.2">
    <property type="organism name" value="mouse"/>
</dbReference>
<dbReference type="AGR" id="MGI:1289298"/>
<dbReference type="CTD" id="90417"/>
<dbReference type="MGI" id="MGI:1289298">
    <property type="gene designation" value="Knstrn"/>
</dbReference>
<dbReference type="VEuPathDB" id="HostDB:ENSMUSG00000027331"/>
<dbReference type="eggNOG" id="ENOG502S60X">
    <property type="taxonomic scope" value="Eukaryota"/>
</dbReference>
<dbReference type="GeneTree" id="ENSGT00390000010376"/>
<dbReference type="InParanoid" id="Q9D9Z1"/>
<dbReference type="OMA" id="QESTADH"/>
<dbReference type="OrthoDB" id="9940269at2759"/>
<dbReference type="PhylomeDB" id="Q9D9Z1"/>
<dbReference type="TreeFam" id="TF336302"/>
<dbReference type="BioGRID-ORCS" id="51944">
    <property type="hits" value="5 hits in 79 CRISPR screens"/>
</dbReference>
<dbReference type="ChiTaRS" id="Knstrn">
    <property type="organism name" value="mouse"/>
</dbReference>
<dbReference type="PRO" id="PR:Q9D9Z1"/>
<dbReference type="Proteomes" id="UP000000589">
    <property type="component" value="Chromosome 2"/>
</dbReference>
<dbReference type="RNAct" id="Q9D9Z1">
    <property type="molecule type" value="protein"/>
</dbReference>
<dbReference type="Bgee" id="ENSMUSG00000027331">
    <property type="expression patterns" value="Expressed in animal zygote and 177 other cell types or tissues"/>
</dbReference>
<dbReference type="ExpressionAtlas" id="Q9D9Z1">
    <property type="expression patterns" value="baseline and differential"/>
</dbReference>
<dbReference type="GO" id="GO:0034451">
    <property type="term" value="C:centriolar satellite"/>
    <property type="evidence" value="ECO:0007669"/>
    <property type="project" value="Ensembl"/>
</dbReference>
<dbReference type="GO" id="GO:0005737">
    <property type="term" value="C:cytoplasm"/>
    <property type="evidence" value="ECO:0007669"/>
    <property type="project" value="UniProtKB-KW"/>
</dbReference>
<dbReference type="GO" id="GO:0000776">
    <property type="term" value="C:kinetochore"/>
    <property type="evidence" value="ECO:0000250"/>
    <property type="project" value="UniProtKB"/>
</dbReference>
<dbReference type="GO" id="GO:0035371">
    <property type="term" value="C:microtubule plus-end"/>
    <property type="evidence" value="ECO:0000250"/>
    <property type="project" value="UniProtKB"/>
</dbReference>
<dbReference type="GO" id="GO:0072686">
    <property type="term" value="C:mitotic spindle"/>
    <property type="evidence" value="ECO:0000250"/>
    <property type="project" value="UniProtKB"/>
</dbReference>
<dbReference type="GO" id="GO:0005634">
    <property type="term" value="C:nucleus"/>
    <property type="evidence" value="ECO:0007669"/>
    <property type="project" value="UniProtKB-SubCell"/>
</dbReference>
<dbReference type="GO" id="GO:0005886">
    <property type="term" value="C:plasma membrane"/>
    <property type="evidence" value="ECO:0007669"/>
    <property type="project" value="Ensembl"/>
</dbReference>
<dbReference type="GO" id="GO:0001726">
    <property type="term" value="C:ruffle"/>
    <property type="evidence" value="ECO:0007669"/>
    <property type="project" value="Ensembl"/>
</dbReference>
<dbReference type="GO" id="GO:0000922">
    <property type="term" value="C:spindle pole"/>
    <property type="evidence" value="ECO:0007669"/>
    <property type="project" value="UniProtKB-SubCell"/>
</dbReference>
<dbReference type="GO" id="GO:0051010">
    <property type="term" value="F:microtubule plus-end binding"/>
    <property type="evidence" value="ECO:0007669"/>
    <property type="project" value="Ensembl"/>
</dbReference>
<dbReference type="GO" id="GO:0042803">
    <property type="term" value="F:protein homodimerization activity"/>
    <property type="evidence" value="ECO:0007669"/>
    <property type="project" value="Ensembl"/>
</dbReference>
<dbReference type="GO" id="GO:0051301">
    <property type="term" value="P:cell division"/>
    <property type="evidence" value="ECO:0007669"/>
    <property type="project" value="UniProtKB-KW"/>
</dbReference>
<dbReference type="GO" id="GO:0016477">
    <property type="term" value="P:cell migration"/>
    <property type="evidence" value="ECO:0007669"/>
    <property type="project" value="Ensembl"/>
</dbReference>
<dbReference type="GO" id="GO:0071364">
    <property type="term" value="P:cellular response to epidermal growth factor stimulus"/>
    <property type="evidence" value="ECO:0007669"/>
    <property type="project" value="Ensembl"/>
</dbReference>
<dbReference type="GO" id="GO:0007059">
    <property type="term" value="P:chromosome segregation"/>
    <property type="evidence" value="ECO:0000250"/>
    <property type="project" value="UniProtKB"/>
</dbReference>
<dbReference type="GO" id="GO:0000070">
    <property type="term" value="P:mitotic sister chromatid segregation"/>
    <property type="evidence" value="ECO:0000250"/>
    <property type="project" value="UniProtKB"/>
</dbReference>
<dbReference type="GO" id="GO:0051988">
    <property type="term" value="P:regulation of attachment of spindle microtubules to kinetochore"/>
    <property type="evidence" value="ECO:0000250"/>
    <property type="project" value="UniProtKB"/>
</dbReference>
<dbReference type="GO" id="GO:0007051">
    <property type="term" value="P:spindle organization"/>
    <property type="evidence" value="ECO:0000250"/>
    <property type="project" value="UniProtKB"/>
</dbReference>
<dbReference type="InterPro" id="IPR033373">
    <property type="entry name" value="SKAP"/>
</dbReference>
<dbReference type="PANTHER" id="PTHR31940">
    <property type="entry name" value="SMALL KINETOCHORE-ASSOCIATED PROTEIN"/>
    <property type="match status" value="1"/>
</dbReference>
<dbReference type="PANTHER" id="PTHR31940:SF2">
    <property type="entry name" value="SMALL KINETOCHORE-ASSOCIATED PROTEIN"/>
    <property type="match status" value="1"/>
</dbReference>
<name>SKAP_MOUSE</name>
<proteinExistence type="evidence at transcript level"/>
<sequence>MAAPEAEAQETAFRTTGPPTDSEPRPFPPSSRKFPFESAAADSNEDWAVAAEHYLKGSGENGGWEQPAPGVQPSHPATMASAKTVCDAQPHSMPSCGLPADTQTRATSKLPVKSKEADLLRHLHPGGPEPDVTKVTKSRRENGQVKAAETASRRNLRNSYKPFNKQKPEEELKDKNELLEAVNKQLHQKLTETQGELKDLTQKVELLEKFQDNCLALLESKGLNPGQETLASKQEPTTDHTDSMLLLETLKDELKVFNETAKKQMEELQALKVKLKLKEEESVQFLEQQTLCKDEASDFTIILEEMEQLLEM</sequence>